<protein>
    <recommendedName>
        <fullName evidence="1">N-acetyl-gamma-glutamyl-phosphate reductase</fullName>
        <shortName evidence="1">AGPR</shortName>
        <ecNumber evidence="1">1.2.1.38</ecNumber>
    </recommendedName>
    <alternativeName>
        <fullName evidence="1">N-acetyl-glutamate semialdehyde dehydrogenase</fullName>
        <shortName evidence="1">NAGSA dehydrogenase</shortName>
    </alternativeName>
</protein>
<proteinExistence type="inferred from homology"/>
<comment type="function">
    <text evidence="1">Catalyzes the NADPH-dependent reduction of N-acetyl-5-glutamyl phosphate to yield N-acetyl-L-glutamate 5-semialdehyde.</text>
</comment>
<comment type="catalytic activity">
    <reaction evidence="1">
        <text>N-acetyl-L-glutamate 5-semialdehyde + phosphate + NADP(+) = N-acetyl-L-glutamyl 5-phosphate + NADPH + H(+)</text>
        <dbReference type="Rhea" id="RHEA:21588"/>
        <dbReference type="ChEBI" id="CHEBI:15378"/>
        <dbReference type="ChEBI" id="CHEBI:29123"/>
        <dbReference type="ChEBI" id="CHEBI:43474"/>
        <dbReference type="ChEBI" id="CHEBI:57783"/>
        <dbReference type="ChEBI" id="CHEBI:57936"/>
        <dbReference type="ChEBI" id="CHEBI:58349"/>
        <dbReference type="EC" id="1.2.1.38"/>
    </reaction>
</comment>
<comment type="pathway">
    <text evidence="1">Amino-acid biosynthesis; L-arginine biosynthesis; N(2)-acetyl-L-ornithine from L-glutamate: step 3/4.</text>
</comment>
<comment type="subcellular location">
    <subcellularLocation>
        <location evidence="1">Cytoplasm</location>
    </subcellularLocation>
</comment>
<comment type="similarity">
    <text evidence="1">Belongs to the NAGSA dehydrogenase family. Type 1 subfamily.</text>
</comment>
<evidence type="ECO:0000255" key="1">
    <source>
        <dbReference type="HAMAP-Rule" id="MF_00150"/>
    </source>
</evidence>
<dbReference type="EC" id="1.2.1.38" evidence="1"/>
<dbReference type="EMBL" id="AE010300">
    <property type="protein sequence ID" value="AAN49377.1"/>
    <property type="molecule type" value="Genomic_DNA"/>
</dbReference>
<dbReference type="RefSeq" id="NP_712359.1">
    <property type="nucleotide sequence ID" value="NC_004342.2"/>
</dbReference>
<dbReference type="RefSeq" id="WP_000808031.1">
    <property type="nucleotide sequence ID" value="NC_004342.2"/>
</dbReference>
<dbReference type="SMR" id="P59307"/>
<dbReference type="FunCoup" id="P59307">
    <property type="interactions" value="286"/>
</dbReference>
<dbReference type="STRING" id="189518.LA_2178"/>
<dbReference type="PaxDb" id="189518-LA_2178"/>
<dbReference type="EnsemblBacteria" id="AAN49377">
    <property type="protein sequence ID" value="AAN49377"/>
    <property type="gene ID" value="LA_2178"/>
</dbReference>
<dbReference type="KEGG" id="lil:LA_2178"/>
<dbReference type="PATRIC" id="fig|189518.3.peg.2170"/>
<dbReference type="HOGENOM" id="CLU_006384_0_1_12"/>
<dbReference type="InParanoid" id="P59307"/>
<dbReference type="OrthoDB" id="9801289at2"/>
<dbReference type="UniPathway" id="UPA00068">
    <property type="reaction ID" value="UER00108"/>
</dbReference>
<dbReference type="Proteomes" id="UP000001408">
    <property type="component" value="Chromosome I"/>
</dbReference>
<dbReference type="GO" id="GO:0005737">
    <property type="term" value="C:cytoplasm"/>
    <property type="evidence" value="ECO:0007669"/>
    <property type="project" value="UniProtKB-SubCell"/>
</dbReference>
<dbReference type="GO" id="GO:0003942">
    <property type="term" value="F:N-acetyl-gamma-glutamyl-phosphate reductase activity"/>
    <property type="evidence" value="ECO:0007669"/>
    <property type="project" value="UniProtKB-UniRule"/>
</dbReference>
<dbReference type="GO" id="GO:0051287">
    <property type="term" value="F:NAD binding"/>
    <property type="evidence" value="ECO:0007669"/>
    <property type="project" value="InterPro"/>
</dbReference>
<dbReference type="GO" id="GO:0070401">
    <property type="term" value="F:NADP+ binding"/>
    <property type="evidence" value="ECO:0007669"/>
    <property type="project" value="InterPro"/>
</dbReference>
<dbReference type="GO" id="GO:0006526">
    <property type="term" value="P:L-arginine biosynthetic process"/>
    <property type="evidence" value="ECO:0007669"/>
    <property type="project" value="UniProtKB-UniRule"/>
</dbReference>
<dbReference type="CDD" id="cd23934">
    <property type="entry name" value="AGPR_1_C"/>
    <property type="match status" value="1"/>
</dbReference>
<dbReference type="CDD" id="cd17895">
    <property type="entry name" value="AGPR_1_N"/>
    <property type="match status" value="1"/>
</dbReference>
<dbReference type="Gene3D" id="3.30.360.10">
    <property type="entry name" value="Dihydrodipicolinate Reductase, domain 2"/>
    <property type="match status" value="1"/>
</dbReference>
<dbReference type="Gene3D" id="3.40.50.720">
    <property type="entry name" value="NAD(P)-binding Rossmann-like Domain"/>
    <property type="match status" value="1"/>
</dbReference>
<dbReference type="HAMAP" id="MF_00150">
    <property type="entry name" value="ArgC_type1"/>
    <property type="match status" value="1"/>
</dbReference>
<dbReference type="InterPro" id="IPR023013">
    <property type="entry name" value="AGPR_AS"/>
</dbReference>
<dbReference type="InterPro" id="IPR000706">
    <property type="entry name" value="AGPR_type-1"/>
</dbReference>
<dbReference type="InterPro" id="IPR036291">
    <property type="entry name" value="NAD(P)-bd_dom_sf"/>
</dbReference>
<dbReference type="InterPro" id="IPR050085">
    <property type="entry name" value="NAGSA_dehydrogenase"/>
</dbReference>
<dbReference type="InterPro" id="IPR000534">
    <property type="entry name" value="Semialdehyde_DH_NAD-bd"/>
</dbReference>
<dbReference type="NCBIfam" id="TIGR01850">
    <property type="entry name" value="argC"/>
    <property type="match status" value="1"/>
</dbReference>
<dbReference type="PANTHER" id="PTHR32338:SF10">
    <property type="entry name" value="N-ACETYL-GAMMA-GLUTAMYL-PHOSPHATE REDUCTASE, CHLOROPLASTIC-RELATED"/>
    <property type="match status" value="1"/>
</dbReference>
<dbReference type="PANTHER" id="PTHR32338">
    <property type="entry name" value="N-ACETYL-GAMMA-GLUTAMYL-PHOSPHATE REDUCTASE, CHLOROPLASTIC-RELATED-RELATED"/>
    <property type="match status" value="1"/>
</dbReference>
<dbReference type="Pfam" id="PF01118">
    <property type="entry name" value="Semialdhyde_dh"/>
    <property type="match status" value="1"/>
</dbReference>
<dbReference type="Pfam" id="PF22698">
    <property type="entry name" value="Semialdhyde_dhC_1"/>
    <property type="match status" value="1"/>
</dbReference>
<dbReference type="SMART" id="SM00859">
    <property type="entry name" value="Semialdhyde_dh"/>
    <property type="match status" value="1"/>
</dbReference>
<dbReference type="SUPFAM" id="SSF55347">
    <property type="entry name" value="Glyceraldehyde-3-phosphate dehydrogenase-like, C-terminal domain"/>
    <property type="match status" value="1"/>
</dbReference>
<dbReference type="SUPFAM" id="SSF51735">
    <property type="entry name" value="NAD(P)-binding Rossmann-fold domains"/>
    <property type="match status" value="1"/>
</dbReference>
<dbReference type="PROSITE" id="PS01224">
    <property type="entry name" value="ARGC"/>
    <property type="match status" value="1"/>
</dbReference>
<name>ARGC_LEPIN</name>
<keyword id="KW-0028">Amino-acid biosynthesis</keyword>
<keyword id="KW-0055">Arginine biosynthesis</keyword>
<keyword id="KW-0963">Cytoplasm</keyword>
<keyword id="KW-0521">NADP</keyword>
<keyword id="KW-0560">Oxidoreductase</keyword>
<keyword id="KW-1185">Reference proteome</keyword>
<gene>
    <name evidence="1" type="primary">argC</name>
    <name type="ordered locus">LA_2178</name>
</gene>
<accession>P59307</accession>
<feature type="chain" id="PRO_0000112416" description="N-acetyl-gamma-glutamyl-phosphate reductase">
    <location>
        <begin position="1"/>
        <end position="338"/>
    </location>
</feature>
<feature type="active site" evidence="1">
    <location>
        <position position="148"/>
    </location>
</feature>
<organism>
    <name type="scientific">Leptospira interrogans serogroup Icterohaemorrhagiae serovar Lai (strain 56601)</name>
    <dbReference type="NCBI Taxonomy" id="189518"/>
    <lineage>
        <taxon>Bacteria</taxon>
        <taxon>Pseudomonadati</taxon>
        <taxon>Spirochaetota</taxon>
        <taxon>Spirochaetia</taxon>
        <taxon>Leptospirales</taxon>
        <taxon>Leptospiraceae</taxon>
        <taxon>Leptospira</taxon>
    </lineage>
</organism>
<sequence>MAEISILGAGGLTGKELLLLFSRQKEHEVVHITSDKLAGKTISEVFPEVSFPKNLVFKKHEDIVPLKSLVVLAVPNEVSVESAPKFLDAGHKVIDLSGVYRLHNQEILEKYYKLKHTRFNYINRAVFGIPEIFRDQLKNADFVSNPGCFSTSVILPIFLLGQLRKNLRPRIIVDSKSGVSGAGGRTEDSGYSYTSVYENFRAYKILSHQHEPEIREYVYSKSGLSDPEVIFTPHLLPVYRGILSTIVLEFDSEPEQDLISILENSSLNEPFIRILKTPEEVELKKVQHTNFLDISLRKRENTLVVVSALDNLVKGAAGQALQNINLMTGAKETLGLLP</sequence>
<reference key="1">
    <citation type="journal article" date="2003" name="Nature">
        <title>Unique physiological and pathogenic features of Leptospira interrogans revealed by whole-genome sequencing.</title>
        <authorList>
            <person name="Ren S.-X."/>
            <person name="Fu G."/>
            <person name="Jiang X.-G."/>
            <person name="Zeng R."/>
            <person name="Miao Y.-G."/>
            <person name="Xu H."/>
            <person name="Zhang Y.-X."/>
            <person name="Xiong H."/>
            <person name="Lu G."/>
            <person name="Lu L.-F."/>
            <person name="Jiang H.-Q."/>
            <person name="Jia J."/>
            <person name="Tu Y.-F."/>
            <person name="Jiang J.-X."/>
            <person name="Gu W.-Y."/>
            <person name="Zhang Y.-Q."/>
            <person name="Cai Z."/>
            <person name="Sheng H.-H."/>
            <person name="Yin H.-F."/>
            <person name="Zhang Y."/>
            <person name="Zhu G.-F."/>
            <person name="Wan M."/>
            <person name="Huang H.-L."/>
            <person name="Qian Z."/>
            <person name="Wang S.-Y."/>
            <person name="Ma W."/>
            <person name="Yao Z.-J."/>
            <person name="Shen Y."/>
            <person name="Qiang B.-Q."/>
            <person name="Xia Q.-C."/>
            <person name="Guo X.-K."/>
            <person name="Danchin A."/>
            <person name="Saint Girons I."/>
            <person name="Somerville R.L."/>
            <person name="Wen Y.-M."/>
            <person name="Shi M.-H."/>
            <person name="Chen Z."/>
            <person name="Xu J.-G."/>
            <person name="Zhao G.-P."/>
        </authorList>
    </citation>
    <scope>NUCLEOTIDE SEQUENCE [LARGE SCALE GENOMIC DNA]</scope>
    <source>
        <strain>56601</strain>
    </source>
</reference>